<name>RS2_DICDI</name>
<reference key="1">
    <citation type="journal article" date="1991" name="Nucleic Acids Res.">
        <title>A developmentally regulated gene encodes the dictyostelium homolog of yeast ribosomal protein S4 and mammalian LLRep3 proteins.</title>
        <authorList>
            <person name="Proffitt J.A."/>
            <person name="Jagger P.S."/>
            <person name="Wilson G.A."/>
            <person name="Donovan J.T.J."/>
            <person name="Widdowson D.C.C."/>
            <person name="Hames B.D."/>
        </authorList>
    </citation>
    <scope>NUCLEOTIDE SEQUENCE [MRNA]</scope>
    <source>
        <strain>AX2</strain>
    </source>
</reference>
<reference key="2">
    <citation type="journal article" date="2005" name="Nature">
        <title>The genome of the social amoeba Dictyostelium discoideum.</title>
        <authorList>
            <person name="Eichinger L."/>
            <person name="Pachebat J.A."/>
            <person name="Gloeckner G."/>
            <person name="Rajandream M.A."/>
            <person name="Sucgang R."/>
            <person name="Berriman M."/>
            <person name="Song J."/>
            <person name="Olsen R."/>
            <person name="Szafranski K."/>
            <person name="Xu Q."/>
            <person name="Tunggal B."/>
            <person name="Kummerfeld S."/>
            <person name="Madera M."/>
            <person name="Konfortov B.A."/>
            <person name="Rivero F."/>
            <person name="Bankier A.T."/>
            <person name="Lehmann R."/>
            <person name="Hamlin N."/>
            <person name="Davies R."/>
            <person name="Gaudet P."/>
            <person name="Fey P."/>
            <person name="Pilcher K."/>
            <person name="Chen G."/>
            <person name="Saunders D."/>
            <person name="Sodergren E.J."/>
            <person name="Davis P."/>
            <person name="Kerhornou A."/>
            <person name="Nie X."/>
            <person name="Hall N."/>
            <person name="Anjard C."/>
            <person name="Hemphill L."/>
            <person name="Bason N."/>
            <person name="Farbrother P."/>
            <person name="Desany B."/>
            <person name="Just E."/>
            <person name="Morio T."/>
            <person name="Rost R."/>
            <person name="Churcher C.M."/>
            <person name="Cooper J."/>
            <person name="Haydock S."/>
            <person name="van Driessche N."/>
            <person name="Cronin A."/>
            <person name="Goodhead I."/>
            <person name="Muzny D.M."/>
            <person name="Mourier T."/>
            <person name="Pain A."/>
            <person name="Lu M."/>
            <person name="Harper D."/>
            <person name="Lindsay R."/>
            <person name="Hauser H."/>
            <person name="James K.D."/>
            <person name="Quiles M."/>
            <person name="Madan Babu M."/>
            <person name="Saito T."/>
            <person name="Buchrieser C."/>
            <person name="Wardroper A."/>
            <person name="Felder M."/>
            <person name="Thangavelu M."/>
            <person name="Johnson D."/>
            <person name="Knights A."/>
            <person name="Loulseged H."/>
            <person name="Mungall K.L."/>
            <person name="Oliver K."/>
            <person name="Price C."/>
            <person name="Quail M.A."/>
            <person name="Urushihara H."/>
            <person name="Hernandez J."/>
            <person name="Rabbinowitsch E."/>
            <person name="Steffen D."/>
            <person name="Sanders M."/>
            <person name="Ma J."/>
            <person name="Kohara Y."/>
            <person name="Sharp S."/>
            <person name="Simmonds M.N."/>
            <person name="Spiegler S."/>
            <person name="Tivey A."/>
            <person name="Sugano S."/>
            <person name="White B."/>
            <person name="Walker D."/>
            <person name="Woodward J.R."/>
            <person name="Winckler T."/>
            <person name="Tanaka Y."/>
            <person name="Shaulsky G."/>
            <person name="Schleicher M."/>
            <person name="Weinstock G.M."/>
            <person name="Rosenthal A."/>
            <person name="Cox E.C."/>
            <person name="Chisholm R.L."/>
            <person name="Gibbs R.A."/>
            <person name="Loomis W.F."/>
            <person name="Platzer M."/>
            <person name="Kay R.R."/>
            <person name="Williams J.G."/>
            <person name="Dear P.H."/>
            <person name="Noegel A.A."/>
            <person name="Barrell B.G."/>
            <person name="Kuspa A."/>
        </authorList>
    </citation>
    <scope>NUCLEOTIDE SEQUENCE [LARGE SCALE GENOMIC DNA]</scope>
    <source>
        <strain>AX4</strain>
    </source>
</reference>
<reference key="3">
    <citation type="submission" date="2009-07" db="UniProtKB">
        <authorList>
            <person name="Bienvenut W.V."/>
            <person name="Ura S."/>
            <person name="Insall R.H."/>
        </authorList>
    </citation>
    <scope>PROTEIN SEQUENCE OF 2-16; 133-146 AND 199-214</scope>
    <scope>CLEAVAGE OF INITIATOR METHIONINE</scope>
    <scope>ACETYLATION AT ALA-2</scope>
    <scope>IDENTIFICATION BY MASS SPECTROMETRY</scope>
    <source>
        <strain>AX2</strain>
    </source>
</reference>
<proteinExistence type="evidence at protein level"/>
<evidence type="ECO:0000250" key="1">
    <source>
        <dbReference type="UniProtKB" id="P25443"/>
    </source>
</evidence>
<evidence type="ECO:0000255" key="2">
    <source>
        <dbReference type="PROSITE-ProRule" id="PRU00268"/>
    </source>
</evidence>
<evidence type="ECO:0000256" key="3">
    <source>
        <dbReference type="SAM" id="MobiDB-lite"/>
    </source>
</evidence>
<evidence type="ECO:0000269" key="4">
    <source ref="3"/>
</evidence>
<evidence type="ECO:0000305" key="5"/>
<organism>
    <name type="scientific">Dictyostelium discoideum</name>
    <name type="common">Social amoeba</name>
    <dbReference type="NCBI Taxonomy" id="44689"/>
    <lineage>
        <taxon>Eukaryota</taxon>
        <taxon>Amoebozoa</taxon>
        <taxon>Evosea</taxon>
        <taxon>Eumycetozoa</taxon>
        <taxon>Dictyostelia</taxon>
        <taxon>Dictyosteliales</taxon>
        <taxon>Dictyosteliaceae</taxon>
        <taxon>Dictyostelium</taxon>
    </lineage>
</organism>
<protein>
    <recommendedName>
        <fullName evidence="5">Small ribosomal subunit protein uS5</fullName>
    </recommendedName>
    <alternativeName>
        <fullName>40S ribosomal protein S2</fullName>
    </alternativeName>
    <alternativeName>
        <fullName>Protein LLRep3</fullName>
    </alternativeName>
    <alternativeName>
        <fullName>Ribosomal protein S4</fullName>
    </alternativeName>
</protein>
<accession>P27685</accession>
<accession>Q54BC7</accession>
<sequence>MADTTTAAQADQKPTRAFGAGRPQRGAGGAPQRGGPRPQRGGQGETKSWTPVTKLGRLVALGLVENIHEIYLFSLPIKEYQIIDKFLNLKDEVMKIVPVQKQTRAGQRTRFKAFVVVGDHNGHVGLGVKCAKEVATAISGAIVAAKLSVIPVRRGYWGNKLGAPHTVPTKVTGKCGSVAVRLVPAPRGTGIVAARVPKKLLQYAGVDDVYTSSRGKTRTMGNFVMATFFAITKTFAYLTPDLWREVKLIKTPYQEHSAKLSEKQQ</sequence>
<dbReference type="EMBL" id="X56297">
    <property type="protein sequence ID" value="CAA39744.1"/>
    <property type="molecule type" value="mRNA"/>
</dbReference>
<dbReference type="EMBL" id="AAFI02000219">
    <property type="protein sequence ID" value="EAL60548.1"/>
    <property type="molecule type" value="Genomic_DNA"/>
</dbReference>
<dbReference type="PIR" id="S22297">
    <property type="entry name" value="S22297"/>
</dbReference>
<dbReference type="RefSeq" id="XP_628967.1">
    <property type="nucleotide sequence ID" value="XM_628965.1"/>
</dbReference>
<dbReference type="SMR" id="P27685"/>
<dbReference type="FunCoup" id="P27685">
    <property type="interactions" value="451"/>
</dbReference>
<dbReference type="STRING" id="44689.P27685"/>
<dbReference type="PaxDb" id="44689-DDB0215391"/>
<dbReference type="EnsemblProtists" id="EAL60548">
    <property type="protein sequence ID" value="EAL60548"/>
    <property type="gene ID" value="DDB_G0293742"/>
</dbReference>
<dbReference type="GeneID" id="8629395"/>
<dbReference type="KEGG" id="ddi:DDB_G0293742"/>
<dbReference type="dictyBase" id="DDB_G0293742">
    <property type="gene designation" value="rps2"/>
</dbReference>
<dbReference type="VEuPathDB" id="AmoebaDB:DDB_G0293742"/>
<dbReference type="eggNOG" id="KOG0877">
    <property type="taxonomic scope" value="Eukaryota"/>
</dbReference>
<dbReference type="HOGENOM" id="CLU_065898_0_2_1"/>
<dbReference type="InParanoid" id="P27685"/>
<dbReference type="OMA" id="PYEEWSD"/>
<dbReference type="PhylomeDB" id="P27685"/>
<dbReference type="Reactome" id="R-DDI-156827">
    <property type="pathway name" value="L13a-mediated translational silencing of Ceruloplasmin expression"/>
</dbReference>
<dbReference type="Reactome" id="R-DDI-1799339">
    <property type="pathway name" value="SRP-dependent cotranslational protein targeting to membrane"/>
</dbReference>
<dbReference type="Reactome" id="R-DDI-3214858">
    <property type="pathway name" value="RMTs methylate histone arginines"/>
</dbReference>
<dbReference type="Reactome" id="R-DDI-6791226">
    <property type="pathway name" value="Major pathway of rRNA processing in the nucleolus and cytosol"/>
</dbReference>
<dbReference type="Reactome" id="R-DDI-72689">
    <property type="pathway name" value="Formation of a pool of free 40S subunits"/>
</dbReference>
<dbReference type="Reactome" id="R-DDI-72695">
    <property type="pathway name" value="Formation of the ternary complex, and subsequently, the 43S complex"/>
</dbReference>
<dbReference type="Reactome" id="R-DDI-72702">
    <property type="pathway name" value="Ribosomal scanning and start codon recognition"/>
</dbReference>
<dbReference type="Reactome" id="R-DDI-72706">
    <property type="pathway name" value="GTP hydrolysis and joining of the 60S ribosomal subunit"/>
</dbReference>
<dbReference type="Reactome" id="R-DDI-8876725">
    <property type="pathway name" value="Protein methylation"/>
</dbReference>
<dbReference type="Reactome" id="R-DDI-975956">
    <property type="pathway name" value="Nonsense Mediated Decay (NMD) independent of the Exon Junction Complex (EJC)"/>
</dbReference>
<dbReference type="Reactome" id="R-DDI-975957">
    <property type="pathway name" value="Nonsense Mediated Decay (NMD) enhanced by the Exon Junction Complex (EJC)"/>
</dbReference>
<dbReference type="PRO" id="PR:P27685"/>
<dbReference type="Proteomes" id="UP000002195">
    <property type="component" value="Chromosome 6"/>
</dbReference>
<dbReference type="GO" id="GO:0022627">
    <property type="term" value="C:cytosolic small ribosomal subunit"/>
    <property type="evidence" value="ECO:0000318"/>
    <property type="project" value="GO_Central"/>
</dbReference>
<dbReference type="GO" id="GO:0031012">
    <property type="term" value="C:extracellular matrix"/>
    <property type="evidence" value="ECO:0007005"/>
    <property type="project" value="dictyBase"/>
</dbReference>
<dbReference type="GO" id="GO:0003723">
    <property type="term" value="F:RNA binding"/>
    <property type="evidence" value="ECO:0007669"/>
    <property type="project" value="InterPro"/>
</dbReference>
<dbReference type="GO" id="GO:0003735">
    <property type="term" value="F:structural constituent of ribosome"/>
    <property type="evidence" value="ECO:0000318"/>
    <property type="project" value="GO_Central"/>
</dbReference>
<dbReference type="GO" id="GO:0006412">
    <property type="term" value="P:translation"/>
    <property type="evidence" value="ECO:0000318"/>
    <property type="project" value="GO_Central"/>
</dbReference>
<dbReference type="FunFam" id="3.30.160.20:FF:000002">
    <property type="entry name" value="40S ribosomal protein S2"/>
    <property type="match status" value="1"/>
</dbReference>
<dbReference type="FunFam" id="3.30.230.10:FF:000004">
    <property type="entry name" value="40S ribosomal protein S2"/>
    <property type="match status" value="1"/>
</dbReference>
<dbReference type="Gene3D" id="3.30.160.20">
    <property type="match status" value="1"/>
</dbReference>
<dbReference type="Gene3D" id="3.30.230.10">
    <property type="match status" value="1"/>
</dbReference>
<dbReference type="InterPro" id="IPR020568">
    <property type="entry name" value="Ribosomal_Su5_D2-typ_SF"/>
</dbReference>
<dbReference type="InterPro" id="IPR000851">
    <property type="entry name" value="Ribosomal_uS5"/>
</dbReference>
<dbReference type="InterPro" id="IPR005324">
    <property type="entry name" value="Ribosomal_uS5_C"/>
</dbReference>
<dbReference type="InterPro" id="IPR005711">
    <property type="entry name" value="Ribosomal_uS5_euk/arc"/>
</dbReference>
<dbReference type="InterPro" id="IPR013810">
    <property type="entry name" value="Ribosomal_uS5_N"/>
</dbReference>
<dbReference type="InterPro" id="IPR018192">
    <property type="entry name" value="Ribosomal_uS5_N_CS"/>
</dbReference>
<dbReference type="InterPro" id="IPR014721">
    <property type="entry name" value="Ribsml_uS5_D2-typ_fold_subgr"/>
</dbReference>
<dbReference type="NCBIfam" id="TIGR01020">
    <property type="entry name" value="uS5_euk_arch"/>
    <property type="match status" value="1"/>
</dbReference>
<dbReference type="PANTHER" id="PTHR13718:SF4">
    <property type="entry name" value="40S RIBOSOMAL PROTEIN S2"/>
    <property type="match status" value="1"/>
</dbReference>
<dbReference type="PANTHER" id="PTHR13718">
    <property type="entry name" value="RIBOSOMAL S SUBUNIT"/>
    <property type="match status" value="1"/>
</dbReference>
<dbReference type="Pfam" id="PF00333">
    <property type="entry name" value="Ribosomal_S5"/>
    <property type="match status" value="1"/>
</dbReference>
<dbReference type="Pfam" id="PF03719">
    <property type="entry name" value="Ribosomal_S5_C"/>
    <property type="match status" value="1"/>
</dbReference>
<dbReference type="SUPFAM" id="SSF54768">
    <property type="entry name" value="dsRNA-binding domain-like"/>
    <property type="match status" value="1"/>
</dbReference>
<dbReference type="SUPFAM" id="SSF54211">
    <property type="entry name" value="Ribosomal protein S5 domain 2-like"/>
    <property type="match status" value="1"/>
</dbReference>
<dbReference type="PROSITE" id="PS00585">
    <property type="entry name" value="RIBOSOMAL_S5"/>
    <property type="match status" value="1"/>
</dbReference>
<dbReference type="PROSITE" id="PS50881">
    <property type="entry name" value="S5_DSRBD"/>
    <property type="match status" value="1"/>
</dbReference>
<feature type="initiator methionine" description="Removed" evidence="4">
    <location>
        <position position="1"/>
    </location>
</feature>
<feature type="chain" id="PRO_0000131678" description="Small ribosomal subunit protein uS5">
    <location>
        <begin position="2"/>
        <end position="265"/>
    </location>
</feature>
<feature type="domain" description="S5 DRBM" evidence="2">
    <location>
        <begin position="89"/>
        <end position="152"/>
    </location>
</feature>
<feature type="region of interest" description="Disordered" evidence="3">
    <location>
        <begin position="1"/>
        <end position="49"/>
    </location>
</feature>
<feature type="compositionally biased region" description="Low complexity" evidence="3">
    <location>
        <begin position="1"/>
        <end position="25"/>
    </location>
</feature>
<feature type="modified residue" description="N-acetylalanine" evidence="4">
    <location>
        <position position="2"/>
    </location>
</feature>
<keyword id="KW-0007">Acetylation</keyword>
<keyword id="KW-0903">Direct protein sequencing</keyword>
<keyword id="KW-1185">Reference proteome</keyword>
<keyword id="KW-0687">Ribonucleoprotein</keyword>
<keyword id="KW-0689">Ribosomal protein</keyword>
<comment type="function">
    <text evidence="1">Component of the ribosome, a large ribonucleoprotein complex responsible for the synthesis of proteins in the cell. The small ribosomal subunit (SSU) binds messenger RNAs (mRNAs) and translates the encoded message by selecting cognate aminoacyl-transfer RNA (tRNA) molecules. The large subunit (LSU) contains the ribosomal catalytic site termed the peptidyl transferase center (PTC), which catalyzes the formation of peptide bonds, thereby polymerizing the amino acids delivered by tRNAs into a polypeptide chain. The nascent polypeptides leave the ribosome through a tunnel in the LSU and interact with protein factors that function in enzymatic processing, targeting, and the membrane insertion of nascent chains at the exit of the ribosomal tunnel. Plays a role in the assembly and function of the 40S ribosomal subunit. Mutations in this protein affects the control of translational fidelity. Involved in nucleolar processing of pre-18S ribosomal RNA and ribosome assembly.</text>
</comment>
<comment type="similarity">
    <text evidence="5">Belongs to the universal ribosomal protein uS5 family.</text>
</comment>
<gene>
    <name type="primary">rps2</name>
    <name type="synonym">rp29</name>
    <name type="ORF">DDB_G0293742</name>
</gene>